<gene>
    <name type="primary">psiA</name>
    <name type="ordered locus">ECOK12F064</name>
</gene>
<name>PSIA1_ECOLI</name>
<evidence type="ECO:0000305" key="1"/>
<comment type="function">
    <text>Not yet known.</text>
</comment>
<comment type="similarity">
    <text evidence="1">To PsiA protein of plasmid R6-5.</text>
</comment>
<accession>P18148</accession>
<organism>
    <name type="scientific">Escherichia coli (strain K12)</name>
    <dbReference type="NCBI Taxonomy" id="83333"/>
    <lineage>
        <taxon>Bacteria</taxon>
        <taxon>Pseudomonadati</taxon>
        <taxon>Pseudomonadota</taxon>
        <taxon>Gammaproteobacteria</taxon>
        <taxon>Enterobacterales</taxon>
        <taxon>Enterobacteriaceae</taxon>
        <taxon>Escherichia</taxon>
    </lineage>
</organism>
<sequence>MSVRSQALVPLSTEQQAAWRAVAETEKRRHQGNTLAEYPYAGAFFRCLNGSRRISLSDLRFFMPSLTAEELHGNRLQWLYAIDVLIETQGEVCLLPLPGDAAERLFPSVRFRVRERSRHKSALVMQKYSRQQAREAEQKARAYQALVAQAEIELAFHSPETVGSWHARWSDRVAEHDLETLFWQWGERFPSLAGMERWQWQDMPFWQVIAEASLAAREAGHAVREMERWMVPNKLREAA</sequence>
<geneLocation type="plasmid">
    <name>F</name>
</geneLocation>
<dbReference type="EMBL" id="AF106329">
    <property type="protein sequence ID" value="AAA99214.1"/>
    <property type="molecule type" value="Genomic_DNA"/>
</dbReference>
<dbReference type="EMBL" id="AP001918">
    <property type="protein sequence ID" value="BAA97934.1"/>
    <property type="molecule type" value="Genomic_DNA"/>
</dbReference>
<dbReference type="RefSeq" id="NP_061443.1">
    <property type="nucleotide sequence ID" value="NC_002483.1"/>
</dbReference>
<dbReference type="RefSeq" id="YP_190155.1">
    <property type="nucleotide sequence ID" value="NC_006671.1"/>
</dbReference>
<dbReference type="RefSeq" id="YP_443990.1">
    <property type="nucleotide sequence ID" value="NC_007675.1"/>
</dbReference>
<dbReference type="KEGG" id="ecoc:C3026_24420"/>
<dbReference type="PRO" id="PR:P18148"/>
<dbReference type="InterPro" id="IPR009713">
    <property type="entry name" value="Uncharacterised_PsiA"/>
</dbReference>
<dbReference type="NCBIfam" id="NF010258">
    <property type="entry name" value="PRK13704.1"/>
    <property type="match status" value="1"/>
</dbReference>
<dbReference type="Pfam" id="PF06952">
    <property type="entry name" value="PsiA"/>
    <property type="match status" value="1"/>
</dbReference>
<keyword id="KW-0614">Plasmid</keyword>
<feature type="chain" id="PRO_0000068426" description="Protein PsiA">
    <location>
        <begin position="1"/>
        <end position="239"/>
    </location>
</feature>
<protein>
    <recommendedName>
        <fullName>Protein PsiA</fullName>
    </recommendedName>
</protein>
<proteinExistence type="predicted"/>
<reference key="1">
    <citation type="journal article" date="1990" name="Nucleic Acids Res.">
        <title>Nucleotide sequence of the psiA (plasmid SOS inhibition) gene located on the leading region of plasmids F and R6-5.</title>
        <authorList>
            <person name="Loh S."/>
            <person name="Skurray R.A."/>
            <person name="Celerier J."/>
            <person name="Bagdasarian M."/>
            <person name="Bailone A."/>
            <person name="Devoret R."/>
        </authorList>
    </citation>
    <scope>NUCLEOTIDE SEQUENCE [GENOMIC DNA]</scope>
    <source>
        <strain>K12</strain>
    </source>
</reference>
<reference key="2">
    <citation type="submission" date="2000-04" db="EMBL/GenBank/DDBJ databases">
        <title>Complete nucleotide sequence of the F plasmid: its implications for organization and diversification of plasmid genomes.</title>
        <authorList>
            <person name="Shimizu H."/>
            <person name="Saitoh Y."/>
            <person name="Suda Y."/>
            <person name="Uehara K."/>
            <person name="Sampei G."/>
            <person name="Mizobuchi K."/>
        </authorList>
    </citation>
    <scope>NUCLEOTIDE SEQUENCE [LARGE SCALE GENOMIC DNA]</scope>
    <source>
        <strain>K12 / CR63</strain>
    </source>
</reference>